<proteinExistence type="evidence at protein level"/>
<keyword id="KW-0002">3D-structure</keyword>
<keyword id="KW-0007">Acetylation</keyword>
<keyword id="KW-0945">Host-virus interaction</keyword>
<keyword id="KW-0539">Nucleus</keyword>
<keyword id="KW-0597">Phosphoprotein</keyword>
<keyword id="KW-1267">Proteomics identification</keyword>
<keyword id="KW-1185">Reference proteome</keyword>
<keyword id="KW-0690">Ribosome biogenesis</keyword>
<reference key="1">
    <citation type="journal article" date="2000" name="Genomics">
        <title>A transcript map of the chromosome 19q-Arm glioma tumor suppressor region.</title>
        <authorList>
            <person name="Smith J.S."/>
            <person name="Tachibana I."/>
            <person name="Pohl U."/>
            <person name="Lee H.K."/>
            <person name="Thanarajasingam U."/>
            <person name="Portier B.P."/>
            <person name="Ueki K."/>
            <person name="Billings S."/>
            <person name="Ramaswamy S."/>
            <person name="Mohrenweiser H.W."/>
            <person name="Scheithauer B.W."/>
            <person name="Louis D.N."/>
            <person name="Jenkins R.B."/>
        </authorList>
    </citation>
    <scope>NUCLEOTIDE SEQUENCE [MRNA]</scope>
    <scope>VARIANT ARG-389</scope>
    <scope>TISSUE SPECIFICITY</scope>
</reference>
<reference key="2">
    <citation type="journal article" date="2004" name="Genome Res.">
        <title>The status, quality, and expansion of the NIH full-length cDNA project: the Mammalian Gene Collection (MGC).</title>
        <authorList>
            <consortium name="The MGC Project Team"/>
        </authorList>
    </citation>
    <scope>NUCLEOTIDE SEQUENCE [LARGE SCALE MRNA]</scope>
    <scope>VARIANT ARG-389</scope>
    <source>
        <tissue>Muscle</tissue>
    </source>
</reference>
<reference key="3">
    <citation type="journal article" date="1999" name="J. Virol.">
        <title>A novel cellular protein, p60, interacting with both herpes simplex virus 1 regulatory proteins ICP22 and ICP0 is modified in a cell-type-specific manner and is recruited to the nucleus after infection.</title>
        <authorList>
            <person name="Bruni R."/>
            <person name="Fineschi B."/>
            <person name="Ogle W.O."/>
            <person name="Roizman B."/>
        </authorList>
    </citation>
    <scope>NUCLEOTIDE SEQUENCE [MRNA] OF 9-478</scope>
    <scope>SUBCELLULAR LOCATION</scope>
    <scope>INTERACTION WITH HERPES SIMPLEX VIRUS 1 PROTEINS ICP22 AND ICP0 (MICROBIAL INFECTION)</scope>
</reference>
<reference key="4">
    <citation type="submission" date="2000-06" db="EMBL/GenBank/DDBJ databases">
        <authorList>
            <consortium name="The European IMAGE consortium"/>
        </authorList>
    </citation>
    <scope>NUCLEOTIDE SEQUENCE [LARGE SCALE MRNA] OF 12-478</scope>
    <scope>VARIANT ARG-389</scope>
</reference>
<reference key="5">
    <citation type="journal article" date="2007" name="BMC Genomics">
        <title>The full-ORF clone resource of the German cDNA consortium.</title>
        <authorList>
            <person name="Bechtel S."/>
            <person name="Rosenfelder H."/>
            <person name="Duda A."/>
            <person name="Schmidt C.P."/>
            <person name="Ernst U."/>
            <person name="Wellenreuther R."/>
            <person name="Mehrle A."/>
            <person name="Schuster C."/>
            <person name="Bahr A."/>
            <person name="Bloecker H."/>
            <person name="Heubner D."/>
            <person name="Hoerlein A."/>
            <person name="Michel G."/>
            <person name="Wedler H."/>
            <person name="Koehrer K."/>
            <person name="Ottenwaelder B."/>
            <person name="Poustka A."/>
            <person name="Wiemann S."/>
            <person name="Schupp I."/>
        </authorList>
    </citation>
    <scope>NUCLEOTIDE SEQUENCE [LARGE SCALE MRNA] OF 218-477</scope>
    <scope>VARIANT ARG-389</scope>
    <source>
        <tissue>Testis</tissue>
    </source>
</reference>
<reference key="6">
    <citation type="journal article" date="2002" name="Mol. Biol. Cell">
        <title>Functional proteomic analysis of human nucleolus.</title>
        <authorList>
            <person name="Scherl A."/>
            <person name="Coute Y."/>
            <person name="Deon C."/>
            <person name="Calle A."/>
            <person name="Kindbeiter K."/>
            <person name="Sanchez J.-C."/>
            <person name="Greco A."/>
            <person name="Hochstrasser D.F."/>
            <person name="Diaz J.-J."/>
        </authorList>
    </citation>
    <scope>SUBCELLULAR LOCATION [LARGE SCALE ANALYSIS]</scope>
    <source>
        <tissue>Cervix carcinoma</tissue>
    </source>
</reference>
<reference key="7">
    <citation type="journal article" date="2004" name="J. Biol. Chem.">
        <title>Regulation of PTEN phosphorylation and stability by a tumor suppressor candidate protein.</title>
        <authorList>
            <person name="Okahara F."/>
            <person name="Ikawa H."/>
            <person name="Kanaho Y."/>
            <person name="Maehama T."/>
        </authorList>
    </citation>
    <scope>FUNCTION</scope>
    <scope>INTERACTION WITH PTEN</scope>
</reference>
<reference key="8">
    <citation type="journal article" date="2006" name="Mol. Biol. Cell">
        <title>Critical role of PICT-1, a tumor suppressor candidate, in phosphatidylinositol 3,4,5-trisphosphate signals and tumorigenic transformation.</title>
        <authorList>
            <person name="Okahara F."/>
            <person name="Itoh K."/>
            <person name="Nakagawara A."/>
            <person name="Murakami M."/>
            <person name="Kanaho Y."/>
            <person name="Maehama T."/>
        </authorList>
    </citation>
    <scope>FUNCTION</scope>
</reference>
<reference key="9">
    <citation type="journal article" date="2008" name="Proc. Natl. Acad. Sci. U.S.A.">
        <title>A quantitative atlas of mitotic phosphorylation.</title>
        <authorList>
            <person name="Dephoure N."/>
            <person name="Zhou C."/>
            <person name="Villen J."/>
            <person name="Beausoleil S.A."/>
            <person name="Bakalarski C.E."/>
            <person name="Elledge S.J."/>
            <person name="Gygi S.P."/>
        </authorList>
    </citation>
    <scope>IDENTIFICATION BY MASS SPECTROMETRY [LARGE SCALE ANALYSIS]</scope>
    <source>
        <tissue>Cervix carcinoma</tissue>
    </source>
</reference>
<reference key="10">
    <citation type="journal article" date="2010" name="J. Virol.">
        <title>GLTSCR2/PICT-1, a putative tumor suppressor gene product, induces the nucleolar targeting of the Kaposi's sarcoma-associated herpesvirus KS-Bcl-2 protein.</title>
        <authorList>
            <person name="Kalt I."/>
            <person name="Borodianskiy-Shteinberg T."/>
            <person name="Schachor A."/>
            <person name="Sarid R."/>
        </authorList>
    </citation>
    <scope>INTERACTION WITH HUMAN HERPESVIRUS 8 PROTEIN ORF16 (MICROBIAL INFECTION)</scope>
    <scope>SUBCELLULAR LOCATION</scope>
    <scope>REGION</scope>
</reference>
<reference key="11">
    <citation type="journal article" date="2011" name="Am. J. Pathol.">
        <title>Involvement of GLTSCR2 in the DNA Damage Response.</title>
        <authorList>
            <person name="Kim J.Y."/>
            <person name="Seok K.O."/>
            <person name="Kim Y.J."/>
            <person name="Bae W.K."/>
            <person name="Lee S."/>
            <person name="Park J.H."/>
        </authorList>
    </citation>
    <scope>FUNCTION</scope>
    <scope>INDUCTION</scope>
</reference>
<reference key="12">
    <citation type="journal article" date="2011" name="Int. J. Biochem. Cell Biol.">
        <title>Moesin-ezrin-radixin-like protein (merlin) mediates protein interacting with the carboxyl terminus-1 (PICT-1)-induced growth inhibition of glioblastoma cells in the nucleus.</title>
        <authorList>
            <person name="Chen H."/>
            <person name="Mei L."/>
            <person name="Zhou L."/>
            <person name="Zhang X."/>
            <person name="Guo C."/>
            <person name="Li J."/>
            <person name="Wang H."/>
            <person name="Zhu Y."/>
            <person name="Zheng Y."/>
            <person name="Huang L."/>
        </authorList>
    </citation>
    <scope>FUNCTION</scope>
    <scope>INTERACTION WITH NF2</scope>
    <scope>REGION</scope>
</reference>
<reference key="13">
    <citation type="journal article" date="2012" name="Cell Death Differ.">
        <title>Nucleolar protein GLTSCR2 stabilizes p53 in response to ribosomal stresses.</title>
        <authorList>
            <person name="Lee S."/>
            <person name="Kim J.Y."/>
            <person name="Kim Y.J."/>
            <person name="Seok K.O."/>
            <person name="Kim J.H."/>
            <person name="Chang Y.J."/>
            <person name="Kang H.Y."/>
            <person name="Park J.H."/>
        </authorList>
    </citation>
    <scope>FUNCTION</scope>
    <scope>INTERACTION WITH TP53</scope>
    <scope>SUBCELLULAR LOCATION</scope>
</reference>
<reference key="14">
    <citation type="journal article" date="2012" name="PLoS ONE">
        <title>Nucleolar localization of GLTSCR2/PICT-1 is mediated by multiple unique nucleolar localization sequences.</title>
        <authorList>
            <person name="Kalt I."/>
            <person name="Levy A."/>
            <person name="Borodianskiy-Shteinberg T."/>
            <person name="Sarid R."/>
        </authorList>
    </citation>
    <scope>SUBCELLULAR LOCATION</scope>
    <scope>REGION</scope>
</reference>
<reference key="15">
    <citation type="journal article" date="2012" name="Proc. Natl. Acad. Sci. U.S.A.">
        <title>N-terminal acetylome analyses and functional insights of the N-terminal acetyltransferase NatB.</title>
        <authorList>
            <person name="Van Damme P."/>
            <person name="Lasa M."/>
            <person name="Polevoda B."/>
            <person name="Gazquez C."/>
            <person name="Elosegui-Artola A."/>
            <person name="Kim D.S."/>
            <person name="De Juan-Pardo E."/>
            <person name="Demeyer K."/>
            <person name="Hole K."/>
            <person name="Larrea E."/>
            <person name="Timmerman E."/>
            <person name="Prieto J."/>
            <person name="Arnesen T."/>
            <person name="Sherman F."/>
            <person name="Gevaert K."/>
            <person name="Aldabe R."/>
        </authorList>
    </citation>
    <scope>ACETYLATION [LARGE SCALE ANALYSIS] AT ALA-2</scope>
    <scope>CLEAVAGE OF INITIATOR METHIONINE [LARGE SCALE ANALYSIS]</scope>
    <scope>IDENTIFICATION BY MASS SPECTROMETRY [LARGE SCALE ANALYSIS]</scope>
</reference>
<reference key="16">
    <citation type="journal article" date="2013" name="Cell Rep.">
        <title>The 5S RNP couples p53 homeostasis to ribosome biogenesis and nucleolar stress.</title>
        <authorList>
            <person name="Sloan K.E."/>
            <person name="Bohnsack M.T."/>
            <person name="Watkins N.J."/>
        </authorList>
    </citation>
    <scope>FUNCTION</scope>
</reference>
<reference key="17">
    <citation type="journal article" date="2013" name="J. Proteome Res.">
        <title>Toward a comprehensive characterization of a human cancer cell phosphoproteome.</title>
        <authorList>
            <person name="Zhou H."/>
            <person name="Di Palma S."/>
            <person name="Preisinger C."/>
            <person name="Peng M."/>
            <person name="Polat A.N."/>
            <person name="Heck A.J."/>
            <person name="Mohammed S."/>
        </authorList>
    </citation>
    <scope>PHOSPHORYLATION [LARGE SCALE ANALYSIS] AT SER-29 AND SER-93</scope>
    <scope>IDENTIFICATION BY MASS SPECTROMETRY [LARGE SCALE ANALYSIS]</scope>
    <source>
        <tissue>Cervix carcinoma</tissue>
        <tissue>Erythroleukemia</tissue>
    </source>
</reference>
<reference key="18">
    <citation type="journal article" date="2014" name="J. Biol. Chem.">
        <title>Nucleolar stress induces ubiquitination-independent proteasomal degradation of PICT1 protein.</title>
        <authorList>
            <person name="Maehama T."/>
            <person name="Kawahara K."/>
            <person name="Nishio M."/>
            <person name="Suzuki A."/>
            <person name="Hanada K."/>
        </authorList>
    </citation>
    <scope>SUBCELLULAR LOCATION</scope>
    <scope>INDUCTION</scope>
</reference>
<reference key="19">
    <citation type="journal article" date="2014" name="J. Mol. Biol.">
        <title>The nucleolar PICT-1/GLTSCR2 protein forms homo-oligomers.</title>
        <authorList>
            <person name="Borodianskiy-Shteinberg T."/>
            <person name="Kalt I."/>
            <person name="Kipper S."/>
            <person name="Nachum N."/>
            <person name="Katz S."/>
            <person name="Pauker M.H."/>
            <person name="Barda-Saad M."/>
            <person name="Gerber D."/>
            <person name="Sarid R."/>
        </authorList>
    </citation>
    <scope>SUBUNIT</scope>
</reference>
<reference key="20">
    <citation type="journal article" date="2014" name="Proc. Natl. Acad. Sci. U.S.A.">
        <title>GLTSCR2/PICT1 links mitochondrial stress and Myc signaling.</title>
        <authorList>
            <person name="Yoon J.C."/>
            <person name="Ling A.J."/>
            <person name="Isik M."/>
            <person name="Lee D.Y."/>
            <person name="Steinbaugh M.J."/>
            <person name="Sack L.M."/>
            <person name="Boduch A.N."/>
            <person name="Blackwell T.K."/>
            <person name="Sinclair D.A."/>
            <person name="Elledge S.J."/>
        </authorList>
    </citation>
    <scope>FUNCTION</scope>
    <scope>INTERACTION WITH RPL11</scope>
    <scope>INDUCTION</scope>
</reference>
<reference key="21">
    <citation type="journal article" date="2015" name="Am. J. Pathol.">
        <title>The nucleolar protein GLTSCR2 is an upstream negative regulator of the oncogenic Nucleophosmin-MYC axis.</title>
        <authorList>
            <person name="Kim J.Y."/>
            <person name="Cho Y.E."/>
            <person name="Park J.H."/>
        </authorList>
    </citation>
    <scope>FUNCTION</scope>
    <scope>INTERACTION WITH NPM1</scope>
    <scope>SUBCELLULAR LOCATION</scope>
</reference>
<reference key="22">
    <citation type="journal article" date="2015" name="J. Cell. Mol. Med.">
        <title>GLTSCR2 is an upstream negative regulator of nucleophosmin in cervical cancer.</title>
        <authorList>
            <person name="Kim J.Y."/>
            <person name="Cho Y.E."/>
            <person name="An Y.M."/>
            <person name="Kim S.H."/>
            <person name="Lee Y.G."/>
            <person name="Park J.H."/>
            <person name="Lee S."/>
        </authorList>
    </citation>
    <scope>FUNCTION</scope>
</reference>
<reference key="23">
    <citation type="journal article" date="2016" name="Biochem. Biophys. Res. Commun.">
        <title>c-Jun N-terminal kinase regulates the nucleoplasmic translocation and stability of nucleolar GLTSCR2 protein.</title>
        <authorList>
            <person name="Lee S."/>
            <person name="Cho Y.E."/>
            <person name="Kim Y.J."/>
            <person name="Park J.H."/>
        </authorList>
    </citation>
    <scope>SUBUNIT</scope>
    <scope>SUBCELLULAR LOCATION</scope>
    <scope>UBIQUITINATION</scope>
</reference>
<reference key="24">
    <citation type="journal article" date="2016" name="Oncotarget">
        <title>PICT-1 triggers a pro-death autophagy through inhibiting rRNA transcription and AKT/mTOR/p70S6K signaling pathway.</title>
        <authorList>
            <person name="Chen H."/>
            <person name="Duo Y."/>
            <person name="Hu B."/>
            <person name="Wang Z."/>
            <person name="Zhang F."/>
            <person name="Tsai H."/>
            <person name="Zhang J."/>
            <person name="Zhou L."/>
            <person name="Wang L."/>
            <person name="Wang X."/>
            <person name="Huang L."/>
        </authorList>
    </citation>
    <scope>FUNCTION</scope>
    <scope>INTERACTION WITH UBTF</scope>
    <scope>SUBCELLULAR LOCATION</scope>
</reference>
<reference key="25">
    <citation type="journal article" date="2016" name="Oncotarget">
        <title>PICT-1 is a key nucleolar sensor in DNA damage response signaling that regulates apoptosis through the RPL11-MDM2-p53 pathway.</title>
        <authorList>
            <person name="Chen H."/>
            <person name="Han L."/>
            <person name="Tsai H."/>
            <person name="Wang Z."/>
            <person name="Wu Y."/>
            <person name="Duo Y."/>
            <person name="Cao W."/>
            <person name="Chen L."/>
            <person name="Tan Z."/>
            <person name="Xu N."/>
            <person name="Huang X."/>
            <person name="Zhuang J."/>
            <person name="Huang L."/>
        </authorList>
    </citation>
    <scope>FUNCTION</scope>
    <scope>INTERACTION WITH RPL11</scope>
    <scope>SUBCELLULAR LOCATION</scope>
    <scope>INDUCTION</scope>
    <scope>PHOSPHORYLATION</scope>
    <scope>MUTAGENESIS OF SER-233 AND THR-289</scope>
</reference>
<reference key="26">
    <citation type="journal article" date="2016" name="Sci. Rep.">
        <title>The nucleolar protein GLTSCR2 is required for efficient viral replication.</title>
        <authorList>
            <person name="Wang P."/>
            <person name="Meng W."/>
            <person name="Han S.C."/>
            <person name="Li C.C."/>
            <person name="Wang X.J."/>
            <person name="Wang X.J."/>
        </authorList>
    </citation>
    <scope>FUNCTION</scope>
    <scope>INTERACTION WITH RIGI</scope>
    <scope>SUBCELLULAR LOCATION</scope>
</reference>
<reference key="27">
    <citation type="journal article" date="2017" name="Oncotarget">
        <title>GLTSCR2 promotes the nucleoplasmic translocation and subsequent degradation of nucleolar ARF.</title>
        <authorList>
            <person name="Lee S."/>
            <person name="Cho Y.E."/>
            <person name="Kim S.H."/>
            <person name="Kim Y.J."/>
            <person name="Park J.H."/>
        </authorList>
    </citation>
    <scope>INTERACTION WITH CDKN2A/ISOFORM TUMOR SUPPRESSOR ARF</scope>
    <scope>SUBCELLULAR LOCATION</scope>
    <scope>REGION</scope>
</reference>
<feature type="initiator methionine" description="Removed" evidence="34">
    <location>
        <position position="1"/>
    </location>
</feature>
<feature type="chain" id="PRO_0000218960" description="Ribosome biogenesis protein NOP53">
    <location>
        <begin position="2"/>
        <end position="478"/>
    </location>
</feature>
<feature type="region of interest" description="Disordered" evidence="2">
    <location>
        <begin position="1"/>
        <end position="51"/>
    </location>
</feature>
<feature type="region of interest" description="Mediates interaction with CDKN2A/isoform tumor suppressor ARF" evidence="22">
    <location>
        <begin position="148"/>
        <end position="431"/>
    </location>
</feature>
<feature type="region of interest" description="Mediates interaction with NF2" evidence="11">
    <location>
        <begin position="181"/>
        <end position="478"/>
    </location>
</feature>
<feature type="region of interest" description="Disordered" evidence="2">
    <location>
        <begin position="303"/>
        <end position="344"/>
    </location>
</feature>
<feature type="region of interest" description="Mediates interaction with human herpesvirus 8 protein ORF16" evidence="10">
    <location>
        <begin position="342"/>
        <end position="386"/>
    </location>
</feature>
<feature type="region of interest" description="Nucleolar localization signal" evidence="13">
    <location>
        <begin position="347"/>
        <end position="395"/>
    </location>
</feature>
<feature type="region of interest" description="Nucleolar localization signal" evidence="13">
    <location>
        <begin position="396"/>
        <end position="478"/>
    </location>
</feature>
<feature type="compositionally biased region" description="Gly residues" evidence="2">
    <location>
        <begin position="1"/>
        <end position="10"/>
    </location>
</feature>
<feature type="compositionally biased region" description="Basic residues" evidence="2">
    <location>
        <begin position="35"/>
        <end position="49"/>
    </location>
</feature>
<feature type="compositionally biased region" description="Basic and acidic residues" evidence="2">
    <location>
        <begin position="333"/>
        <end position="342"/>
    </location>
</feature>
<feature type="modified residue" description="N-acetylalanine" evidence="34">
    <location>
        <position position="2"/>
    </location>
</feature>
<feature type="modified residue" description="Phosphoserine" evidence="35">
    <location>
        <position position="29"/>
    </location>
</feature>
<feature type="modified residue" description="Phosphoserine" evidence="35">
    <location>
        <position position="93"/>
    </location>
</feature>
<feature type="modified residue" description="Phosphoserine" evidence="1">
    <location>
        <position position="305"/>
    </location>
</feature>
<feature type="sequence variant" id="VAR_024456" description="In dbSNP:rs1042401.">
    <original>S</original>
    <variation>R</variation>
    <location>
        <position position="16"/>
    </location>
</feature>
<feature type="sequence variant" id="VAR_011486" description="In dbSNP:rs1804994." evidence="4 7 9 26">
    <original>Q</original>
    <variation>R</variation>
    <location>
        <position position="389"/>
    </location>
</feature>
<feature type="mutagenesis site" description="Decreased phosphorylation, degradation and increased interaction with RPL11 in response to DNA damage; when associated with A-289." evidence="25">
    <original>S</original>
    <variation>A</variation>
    <location>
        <position position="233"/>
    </location>
</feature>
<feature type="mutagenesis site" description="Loss of localization to the nucleolus and in response to DNA damage increased degradation and decreased interaction with RPL11; when associated with D-289." evidence="25">
    <original>S</original>
    <variation>D</variation>
    <location>
        <position position="233"/>
    </location>
</feature>
<feature type="mutagenesis site" description="Decreased degradation in response to DNA damage. Decreased phosphorylation, degradation and increased interaction with RPL11 in response to DNA damage; when associated with A-233." evidence="25">
    <original>T</original>
    <variation>A</variation>
    <location>
        <position position="289"/>
    </location>
</feature>
<feature type="mutagenesis site" description="Loss of localization to the nucleolus and in response to DNA damage increased degradation and decreased interaction with RPL11; when associated with D-233." evidence="25">
    <original>T</original>
    <variation>D</variation>
    <location>
        <position position="289"/>
    </location>
</feature>
<feature type="sequence conflict" description="In Ref. 3; AAG30413." evidence="32" ref="3">
    <original>G</original>
    <variation>R</variation>
    <location>
        <position position="9"/>
    </location>
</feature>
<feature type="sequence conflict" description="In Ref. 3; AAG30413." evidence="32" ref="3">
    <original>RRKEQLWEKLAKQGELPREVRRAQARLLNPSATRAKPGPQDTVERP</original>
    <variation>SGRSSYGRSWPSRASSPGGAQGPSPVAQPFCNKGPNPAPGHRIAA</variation>
    <location>
        <begin position="146"/>
        <end position="191"/>
    </location>
</feature>
<feature type="sequence conflict" description="In Ref. 3; AAG30413." evidence="32" ref="3">
    <original>SDNPLDRPLVGQDEFFLE</original>
    <variation>LNNPDKPVVWPGCLFPG</variation>
    <location>
        <begin position="198"/>
        <end position="215"/>
    </location>
</feature>
<feature type="sequence conflict" description="In Ref. 2; AAH04229." evidence="32" ref="2">
    <original>A</original>
    <variation>S</variation>
    <location>
        <position position="235"/>
    </location>
</feature>
<feature type="sequence conflict" description="In Ref. 3; AAG30413." evidence="32" ref="3">
    <original>D</original>
    <variation>H</variation>
    <location>
        <position position="417"/>
    </location>
</feature>
<feature type="sequence conflict" description="In Ref. 5; CAB59242." evidence="32" ref="5">
    <original>PEGNILRDRFKSFQRRNMIEPRERAKFKRKYKVKLVEKRAFREIQ</original>
    <variation>VLTVSCRGAPCPVMTPSLLPVPPRGYGRHHGCPWAGPVGPMPRG</variation>
    <location>
        <begin position="433"/>
        <end position="477"/>
    </location>
</feature>
<feature type="sequence conflict" description="In Ref. 3; AAG30413." evidence="32" ref="3">
    <original>EGNILRDRFKSFQRRNMIEPRERAKFKRKYKVKLVEKRAFREIQL</original>
    <variation>RGQHSFETGSRAFRGGI</variation>
    <location>
        <begin position="434"/>
        <end position="478"/>
    </location>
</feature>
<organism>
    <name type="scientific">Homo sapiens</name>
    <name type="common">Human</name>
    <dbReference type="NCBI Taxonomy" id="9606"/>
    <lineage>
        <taxon>Eukaryota</taxon>
        <taxon>Metazoa</taxon>
        <taxon>Chordata</taxon>
        <taxon>Craniata</taxon>
        <taxon>Vertebrata</taxon>
        <taxon>Euteleostomi</taxon>
        <taxon>Mammalia</taxon>
        <taxon>Eutheria</taxon>
        <taxon>Euarchontoglires</taxon>
        <taxon>Primates</taxon>
        <taxon>Haplorrhini</taxon>
        <taxon>Catarrhini</taxon>
        <taxon>Hominidae</taxon>
        <taxon>Homo</taxon>
    </lineage>
</organism>
<name>NOP53_HUMAN</name>
<gene>
    <name evidence="33" type="primary">NOP53</name>
    <name evidence="30" type="synonym">GLT</name>
    <name evidence="28" type="synonym">GLTSCR2</name>
    <name evidence="31" type="synonym">PICT1</name>
</gene>
<sequence>MAAGGSGVGGKRSSKSDADSGFLGLRPTSVDPALRRRRRGPRNKKRGWRRLAQEPLGLEVDQFLEDVRLQERTSGGLLSEAPNEKLFFVDTGSKEKGLTKKRTKVQKKSLLLKKPLRVDLILENTSKVPAPKDVLAHQVPNAKKLRRKEQLWEKLAKQGELPREVRRAQARLLNPSATRAKPGPQDTVERPFYDLWASDNPLDRPLVGQDEFFLEQTKKKGVKRPARLHTKPSQAPAVEVAPAGASYNPSFEDHQTLLSAAHEVELQRQKEAEKLERQLALPATEQAATQESTFQELCEGLLEESDGEGEPGQGEGPEAGDAEVCPTPARLATTEKKTEQQRRREKAVHRLRVQQAALRAARLRHQELFRLRGIKAQVALRLAELARRQRRRQARREAEADKPRRLGRLKYQAPDIDVQLSSELTDSLRTLKPEGNILRDRFKSFQRRNMIEPRERAKFKRKYKVKLVEKRAFREIQL</sequence>
<dbReference type="EMBL" id="AF182076">
    <property type="protein sequence ID" value="AAF62873.1"/>
    <property type="molecule type" value="mRNA"/>
</dbReference>
<dbReference type="EMBL" id="BC004229">
    <property type="protein sequence ID" value="AAH04229.2"/>
    <property type="molecule type" value="mRNA"/>
</dbReference>
<dbReference type="EMBL" id="BC006311">
    <property type="protein sequence ID" value="AAH06311.1"/>
    <property type="molecule type" value="mRNA"/>
</dbReference>
<dbReference type="EMBL" id="BC010095">
    <property type="protein sequence ID" value="AAH10095.1"/>
    <property type="molecule type" value="mRNA"/>
</dbReference>
<dbReference type="EMBL" id="AF296124">
    <property type="protein sequence ID" value="AAG30413.1"/>
    <property type="molecule type" value="mRNA"/>
</dbReference>
<dbReference type="EMBL" id="AL359335">
    <property type="protein sequence ID" value="CAB94786.1"/>
    <property type="molecule type" value="mRNA"/>
</dbReference>
<dbReference type="EMBL" id="AL359336">
    <property type="protein sequence ID" value="CAB94787.1"/>
    <property type="molecule type" value="mRNA"/>
</dbReference>
<dbReference type="EMBL" id="AL122063">
    <property type="protein sequence ID" value="CAB59242.1"/>
    <property type="molecule type" value="mRNA"/>
</dbReference>
<dbReference type="CCDS" id="CCDS12705.1"/>
<dbReference type="RefSeq" id="NP_056525.2">
    <property type="nucleotide sequence ID" value="NM_015710.5"/>
</dbReference>
<dbReference type="PDB" id="8FKZ">
    <property type="method" value="EM"/>
    <property type="resolution" value="3.04 A"/>
    <property type="chains" value="NL=1-478"/>
</dbReference>
<dbReference type="PDB" id="8FL2">
    <property type="method" value="EM"/>
    <property type="resolution" value="2.67 A"/>
    <property type="chains" value="NL=1-478"/>
</dbReference>
<dbReference type="PDB" id="8FL3">
    <property type="method" value="EM"/>
    <property type="resolution" value="2.53 A"/>
    <property type="chains" value="NL=1-478"/>
</dbReference>
<dbReference type="PDB" id="8FL4">
    <property type="method" value="EM"/>
    <property type="resolution" value="2.89 A"/>
    <property type="chains" value="NL=1-478"/>
</dbReference>
<dbReference type="PDB" id="8FL6">
    <property type="method" value="EM"/>
    <property type="resolution" value="2.62 A"/>
    <property type="chains" value="NL=1-478"/>
</dbReference>
<dbReference type="PDB" id="8FL7">
    <property type="method" value="EM"/>
    <property type="resolution" value="2.55 A"/>
    <property type="chains" value="NL=1-478"/>
</dbReference>
<dbReference type="PDB" id="8FLA">
    <property type="method" value="EM"/>
    <property type="resolution" value="2.63 A"/>
    <property type="chains" value="NL=1-478"/>
</dbReference>
<dbReference type="PDB" id="8FLB">
    <property type="method" value="EM"/>
    <property type="resolution" value="2.55 A"/>
    <property type="chains" value="NL=1-478"/>
</dbReference>
<dbReference type="PDB" id="8FLD">
    <property type="method" value="EM"/>
    <property type="resolution" value="2.58 A"/>
    <property type="chains" value="NL=1-478"/>
</dbReference>
<dbReference type="PDB" id="8FLE">
    <property type="method" value="EM"/>
    <property type="resolution" value="2.48 A"/>
    <property type="chains" value="NL=1-478"/>
</dbReference>
<dbReference type="PDB" id="8INE">
    <property type="method" value="EM"/>
    <property type="resolution" value="3.20 A"/>
    <property type="chains" value="w=1-478"/>
</dbReference>
<dbReference type="PDB" id="8INF">
    <property type="method" value="EM"/>
    <property type="resolution" value="3.00 A"/>
    <property type="chains" value="w=1-478"/>
</dbReference>
<dbReference type="PDB" id="8IPX">
    <property type="method" value="EM"/>
    <property type="resolution" value="4.30 A"/>
    <property type="chains" value="f=1-478"/>
</dbReference>
<dbReference type="PDB" id="8IPY">
    <property type="method" value="EM"/>
    <property type="resolution" value="3.20 A"/>
    <property type="chains" value="f=1-478"/>
</dbReference>
<dbReference type="PDB" id="8IR3">
    <property type="method" value="EM"/>
    <property type="resolution" value="3.50 A"/>
    <property type="chains" value="f=1-478"/>
</dbReference>
<dbReference type="PDBsum" id="8FKZ"/>
<dbReference type="PDBsum" id="8FL2"/>
<dbReference type="PDBsum" id="8FL3"/>
<dbReference type="PDBsum" id="8FL4"/>
<dbReference type="PDBsum" id="8FL6"/>
<dbReference type="PDBsum" id="8FL7"/>
<dbReference type="PDBsum" id="8FLA"/>
<dbReference type="PDBsum" id="8FLB"/>
<dbReference type="PDBsum" id="8FLD"/>
<dbReference type="PDBsum" id="8FLE"/>
<dbReference type="PDBsum" id="8INE"/>
<dbReference type="PDBsum" id="8INF"/>
<dbReference type="PDBsum" id="8IPX"/>
<dbReference type="PDBsum" id="8IPY"/>
<dbReference type="PDBsum" id="8IR3"/>
<dbReference type="EMDB" id="EMD-29262"/>
<dbReference type="EMDB" id="EMD-29265"/>
<dbReference type="EMDB" id="EMD-29266"/>
<dbReference type="EMDB" id="EMD-29267"/>
<dbReference type="EMDB" id="EMD-29268"/>
<dbReference type="EMDB" id="EMD-29269"/>
<dbReference type="EMDB" id="EMD-29272"/>
<dbReference type="EMDB" id="EMD-29273"/>
<dbReference type="EMDB" id="EMD-29275"/>
<dbReference type="EMDB" id="EMD-29276"/>
<dbReference type="EMDB" id="EMD-35596"/>
<dbReference type="EMDB" id="EMD-35597"/>
<dbReference type="EMDB" id="EMD-35649"/>
<dbReference type="EMDB" id="EMD-35651"/>
<dbReference type="EMDB" id="EMD-35673"/>
<dbReference type="SMR" id="Q9NZM5"/>
<dbReference type="BioGRID" id="119021">
    <property type="interactions" value="325"/>
</dbReference>
<dbReference type="FunCoup" id="Q9NZM5">
    <property type="interactions" value="3288"/>
</dbReference>
<dbReference type="IntAct" id="Q9NZM5">
    <property type="interactions" value="227"/>
</dbReference>
<dbReference type="MINT" id="Q9NZM5"/>
<dbReference type="STRING" id="9606.ENSP00000246802"/>
<dbReference type="GlyGen" id="Q9NZM5">
    <property type="glycosylation" value="2 sites, 1 O-linked glycan (1 site)"/>
</dbReference>
<dbReference type="iPTMnet" id="Q9NZM5"/>
<dbReference type="PhosphoSitePlus" id="Q9NZM5"/>
<dbReference type="BioMuta" id="NOP53"/>
<dbReference type="DMDM" id="93141272"/>
<dbReference type="jPOST" id="Q9NZM5"/>
<dbReference type="MassIVE" id="Q9NZM5"/>
<dbReference type="PaxDb" id="9606-ENSP00000246802"/>
<dbReference type="PeptideAtlas" id="Q9NZM5"/>
<dbReference type="ProteomicsDB" id="83451"/>
<dbReference type="Pumba" id="Q9NZM5"/>
<dbReference type="Antibodypedia" id="18226">
    <property type="antibodies" value="190 antibodies from 25 providers"/>
</dbReference>
<dbReference type="DNASU" id="29997"/>
<dbReference type="Ensembl" id="ENST00000246802.10">
    <property type="protein sequence ID" value="ENSP00000246802.4"/>
    <property type="gene ID" value="ENSG00000105373.19"/>
</dbReference>
<dbReference type="GeneID" id="29997"/>
<dbReference type="KEGG" id="hsa:29997"/>
<dbReference type="MANE-Select" id="ENST00000246802.10">
    <property type="protein sequence ID" value="ENSP00000246802.4"/>
    <property type="RefSeq nucleotide sequence ID" value="NM_015710.5"/>
    <property type="RefSeq protein sequence ID" value="NP_056525.2"/>
</dbReference>
<dbReference type="UCSC" id="uc002phm.3">
    <property type="organism name" value="human"/>
</dbReference>
<dbReference type="AGR" id="HGNC:4333"/>
<dbReference type="CTD" id="29997"/>
<dbReference type="DisGeNET" id="29997"/>
<dbReference type="GeneCards" id="NOP53"/>
<dbReference type="HGNC" id="HGNC:4333">
    <property type="gene designation" value="NOP53"/>
</dbReference>
<dbReference type="HPA" id="ENSG00000105373">
    <property type="expression patterns" value="Low tissue specificity"/>
</dbReference>
<dbReference type="MIM" id="605691">
    <property type="type" value="gene"/>
</dbReference>
<dbReference type="neXtProt" id="NX_Q9NZM5"/>
<dbReference type="OpenTargets" id="ENSG00000105373"/>
<dbReference type="PharmGKB" id="PA28736"/>
<dbReference type="VEuPathDB" id="HostDB:ENSG00000105373"/>
<dbReference type="eggNOG" id="KOG2823">
    <property type="taxonomic scope" value="Eukaryota"/>
</dbReference>
<dbReference type="GeneTree" id="ENSGT00390000017267"/>
<dbReference type="HOGENOM" id="CLU_035888_0_0_1"/>
<dbReference type="InParanoid" id="Q9NZM5"/>
<dbReference type="OMA" id="TEKWTHK"/>
<dbReference type="OrthoDB" id="5072at2759"/>
<dbReference type="PAN-GO" id="Q9NZM5">
    <property type="GO annotations" value="4 GO annotations based on evolutionary models"/>
</dbReference>
<dbReference type="PhylomeDB" id="Q9NZM5"/>
<dbReference type="TreeFam" id="TF313004"/>
<dbReference type="PathwayCommons" id="Q9NZM5"/>
<dbReference type="SignaLink" id="Q9NZM5"/>
<dbReference type="SIGNOR" id="Q9NZM5"/>
<dbReference type="BioGRID-ORCS" id="29997">
    <property type="hits" value="519 hits in 1170 CRISPR screens"/>
</dbReference>
<dbReference type="CD-CODE" id="232F8A39">
    <property type="entry name" value="P-body"/>
</dbReference>
<dbReference type="CD-CODE" id="91857CE7">
    <property type="entry name" value="Nucleolus"/>
</dbReference>
<dbReference type="ChiTaRS" id="GLTSCR2">
    <property type="organism name" value="human"/>
</dbReference>
<dbReference type="GeneWiki" id="GLTSCR2"/>
<dbReference type="GenomeRNAi" id="29997"/>
<dbReference type="Pharos" id="Q9NZM5">
    <property type="development level" value="Tbio"/>
</dbReference>
<dbReference type="PRO" id="PR:Q9NZM5"/>
<dbReference type="Proteomes" id="UP000005640">
    <property type="component" value="Chromosome 19"/>
</dbReference>
<dbReference type="RNAct" id="Q9NZM5">
    <property type="molecule type" value="protein"/>
</dbReference>
<dbReference type="Bgee" id="ENSG00000105373">
    <property type="expression patterns" value="Expressed in left ovary and 184 other cell types or tissues"/>
</dbReference>
<dbReference type="ExpressionAtlas" id="Q9NZM5">
    <property type="expression patterns" value="baseline and differential"/>
</dbReference>
<dbReference type="GO" id="GO:0005829">
    <property type="term" value="C:cytosol"/>
    <property type="evidence" value="ECO:0000314"/>
    <property type="project" value="UniProtKB"/>
</dbReference>
<dbReference type="GO" id="GO:0001650">
    <property type="term" value="C:fibrillar center"/>
    <property type="evidence" value="ECO:0000314"/>
    <property type="project" value="UniProtKB"/>
</dbReference>
<dbReference type="GO" id="GO:0043231">
    <property type="term" value="C:intracellular membrane-bounded organelle"/>
    <property type="evidence" value="ECO:0000314"/>
    <property type="project" value="HPA"/>
</dbReference>
<dbReference type="GO" id="GO:0005730">
    <property type="term" value="C:nucleolus"/>
    <property type="evidence" value="ECO:0000314"/>
    <property type="project" value="UniProtKB"/>
</dbReference>
<dbReference type="GO" id="GO:0005654">
    <property type="term" value="C:nucleoplasm"/>
    <property type="evidence" value="ECO:0000314"/>
    <property type="project" value="UniProtKB"/>
</dbReference>
<dbReference type="GO" id="GO:0008097">
    <property type="term" value="F:5S rRNA binding"/>
    <property type="evidence" value="ECO:0000314"/>
    <property type="project" value="HGNC"/>
</dbReference>
<dbReference type="GO" id="GO:0042802">
    <property type="term" value="F:identical protein binding"/>
    <property type="evidence" value="ECO:0000314"/>
    <property type="project" value="UniProtKB"/>
</dbReference>
<dbReference type="GO" id="GO:0002039">
    <property type="term" value="F:p53 binding"/>
    <property type="evidence" value="ECO:0000353"/>
    <property type="project" value="UniProtKB"/>
</dbReference>
<dbReference type="GO" id="GO:0003723">
    <property type="term" value="F:RNA binding"/>
    <property type="evidence" value="ECO:0007005"/>
    <property type="project" value="UniProtKB"/>
</dbReference>
<dbReference type="GO" id="GO:0071456">
    <property type="term" value="P:cellular response to hypoxia"/>
    <property type="evidence" value="ECO:0000315"/>
    <property type="project" value="UniProtKB"/>
</dbReference>
<dbReference type="GO" id="GO:0006974">
    <property type="term" value="P:DNA damage response"/>
    <property type="evidence" value="ECO:0000315"/>
    <property type="project" value="UniProtKB"/>
</dbReference>
<dbReference type="GO" id="GO:0006281">
    <property type="term" value="P:DNA repair"/>
    <property type="evidence" value="ECO:0000315"/>
    <property type="project" value="UniProtKB"/>
</dbReference>
<dbReference type="GO" id="GO:0007095">
    <property type="term" value="P:mitotic G2 DNA damage checkpoint signaling"/>
    <property type="evidence" value="ECO:0000315"/>
    <property type="project" value="UniProtKB"/>
</dbReference>
<dbReference type="GO" id="GO:0051898">
    <property type="term" value="P:negative regulation of phosphatidylinositol 3-kinase/protein kinase B signal transduction"/>
    <property type="evidence" value="ECO:0000315"/>
    <property type="project" value="UniProtKB"/>
</dbReference>
<dbReference type="GO" id="GO:0032435">
    <property type="term" value="P:negative regulation of proteasomal ubiquitin-dependent protein catabolic process"/>
    <property type="evidence" value="ECO:0000315"/>
    <property type="project" value="UniProtKB"/>
</dbReference>
<dbReference type="GO" id="GO:0031333">
    <property type="term" value="P:negative regulation of protein-containing complex assembly"/>
    <property type="evidence" value="ECO:0000315"/>
    <property type="project" value="UniProtKB"/>
</dbReference>
<dbReference type="GO" id="GO:1901797">
    <property type="term" value="P:negative regulation of signal transduction by p53 class mediator"/>
    <property type="evidence" value="ECO:0007669"/>
    <property type="project" value="Ensembl"/>
</dbReference>
<dbReference type="GO" id="GO:0000122">
    <property type="term" value="P:negative regulation of transcription by RNA polymerase II"/>
    <property type="evidence" value="ECO:0000315"/>
    <property type="project" value="UniProtKB"/>
</dbReference>
<dbReference type="GO" id="GO:1901837">
    <property type="term" value="P:negative regulation of transcription of nucleolar large rRNA by RNA polymerase I"/>
    <property type="evidence" value="ECO:0000315"/>
    <property type="project" value="UniProtKB"/>
</dbReference>
<dbReference type="GO" id="GO:0032436">
    <property type="term" value="P:positive regulation of proteasomal ubiquitin-dependent protein catabolic process"/>
    <property type="evidence" value="ECO:0000315"/>
    <property type="project" value="UniProtKB"/>
</dbReference>
<dbReference type="GO" id="GO:1903006">
    <property type="term" value="P:positive regulation of protein K63-linked deubiquitination"/>
    <property type="evidence" value="ECO:0000315"/>
    <property type="project" value="UniProtKB"/>
</dbReference>
<dbReference type="GO" id="GO:1902570">
    <property type="term" value="P:protein localization to nucleolus"/>
    <property type="evidence" value="ECO:0007669"/>
    <property type="project" value="Ensembl"/>
</dbReference>
<dbReference type="GO" id="GO:1990173">
    <property type="term" value="P:protein localization to nucleoplasm"/>
    <property type="evidence" value="ECO:0000315"/>
    <property type="project" value="UniProtKB"/>
</dbReference>
<dbReference type="GO" id="GO:0050821">
    <property type="term" value="P:protein stabilization"/>
    <property type="evidence" value="ECO:0000315"/>
    <property type="project" value="UniProtKB"/>
</dbReference>
<dbReference type="GO" id="GO:1903715">
    <property type="term" value="P:regulation of aerobic respiration"/>
    <property type="evidence" value="ECO:0000315"/>
    <property type="project" value="UniProtKB"/>
</dbReference>
<dbReference type="GO" id="GO:0042981">
    <property type="term" value="P:regulation of apoptotic process"/>
    <property type="evidence" value="ECO:0000315"/>
    <property type="project" value="UniProtKB"/>
</dbReference>
<dbReference type="GO" id="GO:0051726">
    <property type="term" value="P:regulation of cell cycle"/>
    <property type="evidence" value="ECO:0000315"/>
    <property type="project" value="UniProtKB"/>
</dbReference>
<dbReference type="GO" id="GO:0001932">
    <property type="term" value="P:regulation of protein phosphorylation"/>
    <property type="evidence" value="ECO:0000315"/>
    <property type="project" value="UniProtKB"/>
</dbReference>
<dbReference type="GO" id="GO:0039535">
    <property type="term" value="P:regulation of RIG-I signaling pathway"/>
    <property type="evidence" value="ECO:0000315"/>
    <property type="project" value="UniProtKB"/>
</dbReference>
<dbReference type="GO" id="GO:1901796">
    <property type="term" value="P:regulation of signal transduction by p53 class mediator"/>
    <property type="evidence" value="ECO:0000315"/>
    <property type="project" value="UniProtKB"/>
</dbReference>
<dbReference type="GO" id="GO:0000027">
    <property type="term" value="P:ribosomal large subunit assembly"/>
    <property type="evidence" value="ECO:0000315"/>
    <property type="project" value="HGNC"/>
</dbReference>
<dbReference type="GO" id="GO:0006364">
    <property type="term" value="P:rRNA processing"/>
    <property type="evidence" value="ECO:0000318"/>
    <property type="project" value="GO_Central"/>
</dbReference>
<dbReference type="InterPro" id="IPR011687">
    <property type="entry name" value="Nop53/GLTSCR2"/>
</dbReference>
<dbReference type="PANTHER" id="PTHR14211">
    <property type="entry name" value="GLIOMA SUPPRESSOR CANDIDATE REGION GENE 2"/>
    <property type="match status" value="1"/>
</dbReference>
<dbReference type="PANTHER" id="PTHR14211:SF8">
    <property type="entry name" value="RIBOSOME BIOGENESIS PROTEIN NOP53"/>
    <property type="match status" value="1"/>
</dbReference>
<dbReference type="Pfam" id="PF07767">
    <property type="entry name" value="Nop53"/>
    <property type="match status" value="1"/>
</dbReference>
<dbReference type="PIRSF" id="PIRSF017302">
    <property type="entry name" value="Gltscr2"/>
    <property type="match status" value="1"/>
</dbReference>
<comment type="function">
    <text evidence="6 8 11 12 14 15 16 19 20 23 24 25">Nucleolar protein which is involved in the integration of the 5S RNP into the ribosomal large subunit during ribosome biogenesis (PubMed:24120868). In ribosome biogenesis, may also play a role in rRNA transcription (PubMed:27729611). Also functions as a nucleolar sensor that regulates the activation of p53/TP53 in response to ribosome biogenesis perturbation, DNA damage and other stress conditions (PubMed:21741933, PubMed:24120868, PubMed:27829214). DNA damage or perturbation of ribosome biogenesis disrupt the interaction between NOP53 and RPL11 allowing RPL11 transport to the nucleoplasm where it can inhibit MDM2 and allow p53/TP53 activation (PubMed:24120868, PubMed:27829214). It may also positively regulate the function of p53/TP53 in cell cycle arrest and apoptosis through direct interaction, preventing its MDM2-dependent ubiquitin-mediated proteasomal degradation (PubMed:22522597). Originally identified as a tumor suppressor, it may also play a role in cell proliferation and apoptosis by positively regulating the stability of PTEN, thereby antagonizing the PI3K-AKT/PKB signaling pathway (PubMed:15355975, PubMed:16971513, PubMed:27729611). May also inhibit cell proliferation and increase apoptosis through its interaction with NF2 (PubMed:21167305). May negatively regulate NPM1 by regulating its nucleoplasmic localization, oligomerization and ubiquitin-mediated proteasomal degradation (PubMed:25818168). Thereby, may prevent NPM1 interaction with MYC and negatively regulate transcription mediated by the MYC-NPM1 complex (PubMed:25956029). May also regulate cellular aerobic respiration (PubMed:24556985). In the cellular response to viral infection, may play a role in the attenuation of interferon-beta through the inhibition of RIGI (PubMed:27824081).</text>
</comment>
<comment type="subunit">
    <text evidence="6 11 14 16 17 20 21 22 23 24 25">Homooligomer (PubMed:24735870, PubMed:26903295). Interacts with PTEN; regulates PTEN phosphorylation and increases its stability (PubMed:15355975). Interacts with RPL11; retains RPL11 into the nucleolus (PubMed:24556985, PubMed:27829214). Interacts with CDKN2A/isoform tumor suppressor ARF; the interaction is direct and promotes ARF nucleoplasmic relocalization and ubiquitin-mediated proteasomal degradation (PubMed:27323397). Interacts with NPM1; the interaction is direct and competitive with MYC (PubMed:25956029). Interacts with NF2 (via FERM domain); the interaction is direct (PubMed:21167305). Interacts with p53/TP53 (via the oligomerization region); the interaction is direct and may prevent the MDM2-mediated proteasomal degradation of p53/TP53 (PubMed:22522597). Interacts with RIGI; may regulate RIGI through USP15-mediated 'Lys-63'-linked deubiquitination (PubMed:27824081). Interacts with UBTF (PubMed:27729611).</text>
</comment>
<comment type="subunit">
    <text evidence="3">(Microbial infection) Interacts with herpes simplex virus 1 early proteins ICP22 and ICP0.</text>
</comment>
<comment type="subunit">
    <text evidence="10">(Microbial infection) Interacts with Human herpesvirus 8 protein ORF16; may sequester ORF16 in host nucleolus and reduce its antiapoptotic activity.</text>
</comment>
<comment type="interaction">
    <interactant intactId="EBI-720156">
        <id>Q9NZM5</id>
    </interactant>
    <interactant intactId="EBI-739624">
        <id>Q8NHQ1</id>
        <label>CEP70</label>
    </interactant>
    <organismsDiffer>false</organismsDiffer>
    <experiments>3</experiments>
</comment>
<comment type="interaction">
    <interactant intactId="EBI-720156">
        <id>Q9NZM5</id>
    </interactant>
    <interactant intactId="EBI-349854">
        <id>P13569</id>
        <label>CFTR</label>
    </interactant>
    <organismsDiffer>false</organismsDiffer>
    <experiments>4</experiments>
</comment>
<comment type="interaction">
    <interactant intactId="EBI-720156">
        <id>Q9NZM5</id>
    </interactant>
    <interactant intactId="EBI-1057009">
        <id>P26583</id>
        <label>HMGB2</label>
    </interactant>
    <organismsDiffer>false</organismsDiffer>
    <experiments>4</experiments>
</comment>
<comment type="interaction">
    <interactant intactId="EBI-720156">
        <id>Q9NZM5</id>
    </interactant>
    <interactant intactId="EBI-995350">
        <id>O95786</id>
        <label>RIGI</label>
    </interactant>
    <organismsDiffer>false</organismsDiffer>
    <experiments>2</experiments>
</comment>
<comment type="interaction">
    <interactant intactId="EBI-720156">
        <id>Q9NZM5</id>
    </interactant>
    <interactant intactId="EBI-947459">
        <id>Q9H2G4</id>
        <label>TSPYL2</label>
    </interactant>
    <organismsDiffer>false</organismsDiffer>
    <experiments>5</experiments>
</comment>
<comment type="subcellular location">
    <subcellularLocation>
        <location evidence="3 5 10 13 14 18 20 23 25">Nucleus</location>
        <location evidence="3 5 10 13 14 18 20 23 25">Nucleolus</location>
    </subcellularLocation>
    <subcellularLocation>
        <location evidence="14 18 21 22">Nucleus</location>
        <location evidence="14 18 21 22">Nucleoplasm</location>
    </subcellularLocation>
    <text evidence="14 18 21 22 23 24">In the nucleolus may be more specifically localized to the fibrillar center (PubMed:27729611). Mainly nucleolar it relocalizes to the nucleoplasm under specific conditions including ribosomal stress enabling it to interact and regulate nucleoplasmic proteins like p53/TP53 (PubMed:22522597, PubMed:24923447, PubMed:26903295, PubMed:27323397). Also detected in the cytosol (PubMed:24923447, PubMed:27824081).</text>
</comment>
<comment type="tissue specificity">
    <text evidence="4">Expressed at high levels in heart and pancreas, moderate levels in placenta, liver, skeletal muscle, and kidney, and low levels in brain and lung.</text>
</comment>
<comment type="induction">
    <text evidence="12 16 18 25">Down-regulated by nucleolar stress through ubiquitin-independent proteasomal degradation (at protein level) (PubMed:24923447). Up-regulated upon mitochondrial stress (at protein level) (PubMed:24556985). Expression of the protein might be regulated by DNA damage but results are not consistent (PubMed:21741933, PubMed:27829214).</text>
</comment>
<comment type="PTM">
    <text evidence="21">Ubiquitin-mediated proteasomal degradation is regulated by c-JUN. It is associated with relocalization to the nucleoplasm and decreased homooligomerization.</text>
</comment>
<comment type="PTM">
    <text evidence="25">Phosphorylated upon DNA damage probably by ATM and DNA-PK; may regulate NOP53 degradation.</text>
</comment>
<comment type="similarity">
    <text evidence="32">Belongs to the NOP53 family.</text>
</comment>
<comment type="online information" name="Atlas of Genetics and Cytogenetics in Oncology and Haematology">
    <link uri="https://atlasgeneticsoncology.org/gene/40723/GLTSCR2"/>
</comment>
<protein>
    <recommendedName>
        <fullName evidence="32">Ribosome biogenesis protein NOP53</fullName>
    </recommendedName>
    <alternativeName>
        <fullName evidence="33">Glioma tumor suppressor candidate region gene 2 protein</fullName>
    </alternativeName>
    <alternativeName>
        <fullName evidence="29">Protein interacting with carboxyl terminus 1</fullName>
        <shortName evidence="29">PICT-1</shortName>
    </alternativeName>
    <alternativeName>
        <fullName evidence="27">p60</fullName>
    </alternativeName>
</protein>
<accession>Q9NZM5</accession>
<accession>Q9BTC6</accession>
<accession>Q9HAX6</accession>
<accession>Q9NPP1</accession>
<accession>Q9NPR4</accession>
<accession>Q9UFI2</accession>
<evidence type="ECO:0000250" key="1">
    <source>
        <dbReference type="UniProtKB" id="Q8BK35"/>
    </source>
</evidence>
<evidence type="ECO:0000256" key="2">
    <source>
        <dbReference type="SAM" id="MobiDB-lite"/>
    </source>
</evidence>
<evidence type="ECO:0000269" key="3">
    <source>
    </source>
</evidence>
<evidence type="ECO:0000269" key="4">
    <source>
    </source>
</evidence>
<evidence type="ECO:0000269" key="5">
    <source>
    </source>
</evidence>
<evidence type="ECO:0000269" key="6">
    <source>
    </source>
</evidence>
<evidence type="ECO:0000269" key="7">
    <source>
    </source>
</evidence>
<evidence type="ECO:0000269" key="8">
    <source>
    </source>
</evidence>
<evidence type="ECO:0000269" key="9">
    <source>
    </source>
</evidence>
<evidence type="ECO:0000269" key="10">
    <source>
    </source>
</evidence>
<evidence type="ECO:0000269" key="11">
    <source>
    </source>
</evidence>
<evidence type="ECO:0000269" key="12">
    <source>
    </source>
</evidence>
<evidence type="ECO:0000269" key="13">
    <source>
    </source>
</evidence>
<evidence type="ECO:0000269" key="14">
    <source>
    </source>
</evidence>
<evidence type="ECO:0000269" key="15">
    <source>
    </source>
</evidence>
<evidence type="ECO:0000269" key="16">
    <source>
    </source>
</evidence>
<evidence type="ECO:0000269" key="17">
    <source>
    </source>
</evidence>
<evidence type="ECO:0000269" key="18">
    <source>
    </source>
</evidence>
<evidence type="ECO:0000269" key="19">
    <source>
    </source>
</evidence>
<evidence type="ECO:0000269" key="20">
    <source>
    </source>
</evidence>
<evidence type="ECO:0000269" key="21">
    <source>
    </source>
</evidence>
<evidence type="ECO:0000269" key="22">
    <source>
    </source>
</evidence>
<evidence type="ECO:0000269" key="23">
    <source>
    </source>
</evidence>
<evidence type="ECO:0000269" key="24">
    <source>
    </source>
</evidence>
<evidence type="ECO:0000269" key="25">
    <source>
    </source>
</evidence>
<evidence type="ECO:0000269" key="26">
    <source ref="4"/>
</evidence>
<evidence type="ECO:0000303" key="27">
    <source>
    </source>
</evidence>
<evidence type="ECO:0000303" key="28">
    <source>
    </source>
</evidence>
<evidence type="ECO:0000303" key="29">
    <source>
    </source>
</evidence>
<evidence type="ECO:0000303" key="30">
    <source>
    </source>
</evidence>
<evidence type="ECO:0000303" key="31">
    <source>
    </source>
</evidence>
<evidence type="ECO:0000305" key="32"/>
<evidence type="ECO:0000312" key="33">
    <source>
        <dbReference type="HGNC" id="HGNC:4333"/>
    </source>
</evidence>
<evidence type="ECO:0007744" key="34">
    <source>
    </source>
</evidence>
<evidence type="ECO:0007744" key="35">
    <source>
    </source>
</evidence>